<accession>B9DVJ4</accession>
<keyword id="KW-1185">Reference proteome</keyword>
<keyword id="KW-0694">RNA-binding</keyword>
<keyword id="KW-0804">Transcription</keyword>
<keyword id="KW-0889">Transcription antitermination</keyword>
<keyword id="KW-0805">Transcription regulation</keyword>
<name>NUSB_STRU0</name>
<comment type="function">
    <text evidence="1">Involved in transcription antitermination. Required for transcription of ribosomal RNA (rRNA) genes. Binds specifically to the boxA antiterminator sequence of the ribosomal RNA (rrn) operons.</text>
</comment>
<comment type="similarity">
    <text evidence="1">Belongs to the NusB family.</text>
</comment>
<evidence type="ECO:0000255" key="1">
    <source>
        <dbReference type="HAMAP-Rule" id="MF_00073"/>
    </source>
</evidence>
<sequence length="142" mass="16382">MTNSFENSRRDLRERAFQALFNMEHGGDFLSASQFAYDYDKVSDQEHDIPAFLLTLVNGVVNHKDELDAIIKEHLKAGWSIERLTLTDRTMLRLGLYEIKFFEETPDRVALNEIIEIAKKYSDETSAKFINGLLSQFVSDSE</sequence>
<organism>
    <name type="scientific">Streptococcus uberis (strain ATCC BAA-854 / 0140J)</name>
    <dbReference type="NCBI Taxonomy" id="218495"/>
    <lineage>
        <taxon>Bacteria</taxon>
        <taxon>Bacillati</taxon>
        <taxon>Bacillota</taxon>
        <taxon>Bacilli</taxon>
        <taxon>Lactobacillales</taxon>
        <taxon>Streptococcaceae</taxon>
        <taxon>Streptococcus</taxon>
    </lineage>
</organism>
<dbReference type="EMBL" id="AM946015">
    <property type="protein sequence ID" value="CAR43313.1"/>
    <property type="molecule type" value="Genomic_DNA"/>
</dbReference>
<dbReference type="RefSeq" id="WP_015911854.1">
    <property type="nucleotide sequence ID" value="NC_012004.1"/>
</dbReference>
<dbReference type="SMR" id="B9DVJ4"/>
<dbReference type="STRING" id="218495.SUB1546"/>
<dbReference type="GeneID" id="93826864"/>
<dbReference type="KEGG" id="sub:SUB1546"/>
<dbReference type="eggNOG" id="COG0781">
    <property type="taxonomic scope" value="Bacteria"/>
</dbReference>
<dbReference type="HOGENOM" id="CLU_087843_3_2_9"/>
<dbReference type="OrthoDB" id="9811381at2"/>
<dbReference type="Proteomes" id="UP000000449">
    <property type="component" value="Chromosome"/>
</dbReference>
<dbReference type="GO" id="GO:0005829">
    <property type="term" value="C:cytosol"/>
    <property type="evidence" value="ECO:0007669"/>
    <property type="project" value="TreeGrafter"/>
</dbReference>
<dbReference type="GO" id="GO:0003723">
    <property type="term" value="F:RNA binding"/>
    <property type="evidence" value="ECO:0007669"/>
    <property type="project" value="UniProtKB-UniRule"/>
</dbReference>
<dbReference type="GO" id="GO:0006353">
    <property type="term" value="P:DNA-templated transcription termination"/>
    <property type="evidence" value="ECO:0007669"/>
    <property type="project" value="UniProtKB-UniRule"/>
</dbReference>
<dbReference type="GO" id="GO:0031564">
    <property type="term" value="P:transcription antitermination"/>
    <property type="evidence" value="ECO:0007669"/>
    <property type="project" value="UniProtKB-KW"/>
</dbReference>
<dbReference type="Gene3D" id="1.10.940.10">
    <property type="entry name" value="NusB-like"/>
    <property type="match status" value="1"/>
</dbReference>
<dbReference type="HAMAP" id="MF_00073">
    <property type="entry name" value="NusB"/>
    <property type="match status" value="1"/>
</dbReference>
<dbReference type="InterPro" id="IPR035926">
    <property type="entry name" value="NusB-like_sf"/>
</dbReference>
<dbReference type="InterPro" id="IPR011605">
    <property type="entry name" value="NusB_fam"/>
</dbReference>
<dbReference type="InterPro" id="IPR006027">
    <property type="entry name" value="NusB_RsmB_TIM44"/>
</dbReference>
<dbReference type="NCBIfam" id="TIGR01951">
    <property type="entry name" value="nusB"/>
    <property type="match status" value="1"/>
</dbReference>
<dbReference type="NCBIfam" id="NF001223">
    <property type="entry name" value="PRK00202.1-1"/>
    <property type="match status" value="1"/>
</dbReference>
<dbReference type="PANTHER" id="PTHR11078:SF3">
    <property type="entry name" value="ANTITERMINATION NUSB DOMAIN-CONTAINING PROTEIN"/>
    <property type="match status" value="1"/>
</dbReference>
<dbReference type="PANTHER" id="PTHR11078">
    <property type="entry name" value="N UTILIZATION SUBSTANCE PROTEIN B-RELATED"/>
    <property type="match status" value="1"/>
</dbReference>
<dbReference type="Pfam" id="PF01029">
    <property type="entry name" value="NusB"/>
    <property type="match status" value="1"/>
</dbReference>
<dbReference type="SUPFAM" id="SSF48013">
    <property type="entry name" value="NusB-like"/>
    <property type="match status" value="1"/>
</dbReference>
<protein>
    <recommendedName>
        <fullName evidence="1">Transcription antitermination protein NusB</fullName>
    </recommendedName>
    <alternativeName>
        <fullName evidence="1">Antitermination factor NusB</fullName>
    </alternativeName>
</protein>
<reference key="1">
    <citation type="journal article" date="2009" name="BMC Genomics">
        <title>Evidence for niche adaptation in the genome of the bovine pathogen Streptococcus uberis.</title>
        <authorList>
            <person name="Ward P.N."/>
            <person name="Holden M.T.G."/>
            <person name="Leigh J.A."/>
            <person name="Lennard N."/>
            <person name="Bignell A."/>
            <person name="Barron A."/>
            <person name="Clark L."/>
            <person name="Quail M.A."/>
            <person name="Woodward J."/>
            <person name="Barrell B.G."/>
            <person name="Egan S.A."/>
            <person name="Field T.R."/>
            <person name="Maskell D."/>
            <person name="Kehoe M."/>
            <person name="Dowson C.G."/>
            <person name="Chanter N."/>
            <person name="Whatmore A.M."/>
            <person name="Bentley S.D."/>
            <person name="Parkhill J."/>
        </authorList>
    </citation>
    <scope>NUCLEOTIDE SEQUENCE [LARGE SCALE GENOMIC DNA]</scope>
    <source>
        <strain>ATCC BAA-854 / 0140J</strain>
    </source>
</reference>
<feature type="chain" id="PRO_1000192464" description="Transcription antitermination protein NusB">
    <location>
        <begin position="1"/>
        <end position="142"/>
    </location>
</feature>
<gene>
    <name evidence="1" type="primary">nusB</name>
    <name type="ordered locus">SUB1546</name>
</gene>
<proteinExistence type="inferred from homology"/>